<sequence length="469" mass="51194">MNKGRVTQIMGPVVDVKFDGGKLPEIYNALTVKQSNENGTSINLTFEVALHLGDDTVRTVAMSSTDGLVRGTEVEDTGKAISVPVGDATLGRVFNVLGDAIDLDGEVPADVRRDPIHRQAPAFEELSTKVEILETGIKVVDLLAPYIKGGKIGLFGGAGVGKTVLIQELINNIAQEHGGISVFAGVGERTREGNDLYHEMSDSGVIKKTAMVFGQMNEPPGARQRVALTGLTMAEHFRDEQGQDVLLFIDNIFRFTQAGSEVSALLGRMPSAVGYQPTLATEMGQLQERITSTNKGSITSIQAVYVPADDYTDPAPATTFAHLDATTNLERRLTQMGIYPAVDPLASTSRALSPEIVGEEHYEVARQVQQTLQRYKELQDIIAILGMDELSEEDKLVVHRARRIQFFLSQNFHVAEQFTGQKGSYVPVKETVRGFKEILEGKYDDLPEDAFRLVGGIEEVIENAKKMMA</sequence>
<comment type="function">
    <text evidence="1">Produces ATP from ADP in the presence of a proton gradient across the membrane. The catalytic sites are hosted primarily by the beta subunits.</text>
</comment>
<comment type="catalytic activity">
    <reaction evidence="1">
        <text>ATP + H2O + 4 H(+)(in) = ADP + phosphate + 5 H(+)(out)</text>
        <dbReference type="Rhea" id="RHEA:57720"/>
        <dbReference type="ChEBI" id="CHEBI:15377"/>
        <dbReference type="ChEBI" id="CHEBI:15378"/>
        <dbReference type="ChEBI" id="CHEBI:30616"/>
        <dbReference type="ChEBI" id="CHEBI:43474"/>
        <dbReference type="ChEBI" id="CHEBI:456216"/>
        <dbReference type="EC" id="7.1.2.2"/>
    </reaction>
</comment>
<comment type="subunit">
    <text evidence="1">F-type ATPases have 2 components, CF(1) - the catalytic core - and CF(0) - the membrane proton channel. CF(1) has five subunits: alpha(3), beta(3), gamma(1), delta(1), epsilon(1). CF(0) has three main subunits: a(1), b(2) and c(9-12). The alpha and beta chains form an alternating ring which encloses part of the gamma chain. CF(1) is attached to CF(0) by a central stalk formed by the gamma and epsilon chains, while a peripheral stalk is formed by the delta and b chains.</text>
</comment>
<comment type="subcellular location">
    <subcellularLocation>
        <location evidence="1">Cell membrane</location>
        <topology evidence="1">Peripheral membrane protein</topology>
    </subcellularLocation>
</comment>
<comment type="similarity">
    <text evidence="1">Belongs to the ATPase alpha/beta chains family.</text>
</comment>
<dbReference type="EC" id="7.1.2.2" evidence="1"/>
<dbReference type="EMBL" id="CP000001">
    <property type="protein sequence ID" value="AAU15276.1"/>
    <property type="molecule type" value="Genomic_DNA"/>
</dbReference>
<dbReference type="RefSeq" id="WP_001032600.1">
    <property type="nucleotide sequence ID" value="NZ_CP009968.1"/>
</dbReference>
<dbReference type="SMR" id="Q630U3"/>
<dbReference type="GeneID" id="45025135"/>
<dbReference type="KEGG" id="bcz:BCE33L5005"/>
<dbReference type="PATRIC" id="fig|288681.22.peg.341"/>
<dbReference type="Proteomes" id="UP000002612">
    <property type="component" value="Chromosome"/>
</dbReference>
<dbReference type="GO" id="GO:0005886">
    <property type="term" value="C:plasma membrane"/>
    <property type="evidence" value="ECO:0007669"/>
    <property type="project" value="UniProtKB-SubCell"/>
</dbReference>
<dbReference type="GO" id="GO:0045259">
    <property type="term" value="C:proton-transporting ATP synthase complex"/>
    <property type="evidence" value="ECO:0007669"/>
    <property type="project" value="UniProtKB-KW"/>
</dbReference>
<dbReference type="GO" id="GO:0005524">
    <property type="term" value="F:ATP binding"/>
    <property type="evidence" value="ECO:0007669"/>
    <property type="project" value="UniProtKB-UniRule"/>
</dbReference>
<dbReference type="GO" id="GO:0016887">
    <property type="term" value="F:ATP hydrolysis activity"/>
    <property type="evidence" value="ECO:0007669"/>
    <property type="project" value="InterPro"/>
</dbReference>
<dbReference type="GO" id="GO:0046933">
    <property type="term" value="F:proton-transporting ATP synthase activity, rotational mechanism"/>
    <property type="evidence" value="ECO:0007669"/>
    <property type="project" value="UniProtKB-UniRule"/>
</dbReference>
<dbReference type="CDD" id="cd18110">
    <property type="entry name" value="ATP-synt_F1_beta_C"/>
    <property type="match status" value="1"/>
</dbReference>
<dbReference type="CDD" id="cd18115">
    <property type="entry name" value="ATP-synt_F1_beta_N"/>
    <property type="match status" value="1"/>
</dbReference>
<dbReference type="CDD" id="cd01133">
    <property type="entry name" value="F1-ATPase_beta_CD"/>
    <property type="match status" value="1"/>
</dbReference>
<dbReference type="FunFam" id="1.10.1140.10:FF:000001">
    <property type="entry name" value="ATP synthase subunit beta"/>
    <property type="match status" value="1"/>
</dbReference>
<dbReference type="FunFam" id="2.40.10.170:FF:000005">
    <property type="entry name" value="ATP synthase subunit beta"/>
    <property type="match status" value="1"/>
</dbReference>
<dbReference type="FunFam" id="3.40.50.300:FF:000004">
    <property type="entry name" value="ATP synthase subunit beta"/>
    <property type="match status" value="1"/>
</dbReference>
<dbReference type="Gene3D" id="2.40.10.170">
    <property type="match status" value="1"/>
</dbReference>
<dbReference type="Gene3D" id="1.10.1140.10">
    <property type="entry name" value="Bovine Mitochondrial F1-atpase, Atp Synthase Beta Chain, Chain D, domain 3"/>
    <property type="match status" value="1"/>
</dbReference>
<dbReference type="Gene3D" id="3.40.50.300">
    <property type="entry name" value="P-loop containing nucleotide triphosphate hydrolases"/>
    <property type="match status" value="1"/>
</dbReference>
<dbReference type="HAMAP" id="MF_01347">
    <property type="entry name" value="ATP_synth_beta_bact"/>
    <property type="match status" value="1"/>
</dbReference>
<dbReference type="InterPro" id="IPR003593">
    <property type="entry name" value="AAA+_ATPase"/>
</dbReference>
<dbReference type="InterPro" id="IPR055190">
    <property type="entry name" value="ATP-synt_VA_C"/>
</dbReference>
<dbReference type="InterPro" id="IPR005722">
    <property type="entry name" value="ATP_synth_F1_bsu"/>
</dbReference>
<dbReference type="InterPro" id="IPR020003">
    <property type="entry name" value="ATPase_a/bsu_AS"/>
</dbReference>
<dbReference type="InterPro" id="IPR050053">
    <property type="entry name" value="ATPase_alpha/beta_chains"/>
</dbReference>
<dbReference type="InterPro" id="IPR004100">
    <property type="entry name" value="ATPase_F1/V1/A1_a/bsu_N"/>
</dbReference>
<dbReference type="InterPro" id="IPR036121">
    <property type="entry name" value="ATPase_F1/V1/A1_a/bsu_N_sf"/>
</dbReference>
<dbReference type="InterPro" id="IPR000194">
    <property type="entry name" value="ATPase_F1/V1/A1_a/bsu_nucl-bd"/>
</dbReference>
<dbReference type="InterPro" id="IPR024034">
    <property type="entry name" value="ATPase_F1/V1_b/a_C"/>
</dbReference>
<dbReference type="InterPro" id="IPR027417">
    <property type="entry name" value="P-loop_NTPase"/>
</dbReference>
<dbReference type="NCBIfam" id="TIGR01039">
    <property type="entry name" value="atpD"/>
    <property type="match status" value="1"/>
</dbReference>
<dbReference type="PANTHER" id="PTHR15184">
    <property type="entry name" value="ATP SYNTHASE"/>
    <property type="match status" value="1"/>
</dbReference>
<dbReference type="PANTHER" id="PTHR15184:SF71">
    <property type="entry name" value="ATP SYNTHASE SUBUNIT BETA, MITOCHONDRIAL"/>
    <property type="match status" value="1"/>
</dbReference>
<dbReference type="Pfam" id="PF00006">
    <property type="entry name" value="ATP-synt_ab"/>
    <property type="match status" value="1"/>
</dbReference>
<dbReference type="Pfam" id="PF02874">
    <property type="entry name" value="ATP-synt_ab_N"/>
    <property type="match status" value="1"/>
</dbReference>
<dbReference type="Pfam" id="PF22919">
    <property type="entry name" value="ATP-synt_VA_C"/>
    <property type="match status" value="1"/>
</dbReference>
<dbReference type="SMART" id="SM00382">
    <property type="entry name" value="AAA"/>
    <property type="match status" value="1"/>
</dbReference>
<dbReference type="SUPFAM" id="SSF47917">
    <property type="entry name" value="C-terminal domain of alpha and beta subunits of F1 ATP synthase"/>
    <property type="match status" value="1"/>
</dbReference>
<dbReference type="SUPFAM" id="SSF50615">
    <property type="entry name" value="N-terminal domain of alpha and beta subunits of F1 ATP synthase"/>
    <property type="match status" value="1"/>
</dbReference>
<dbReference type="SUPFAM" id="SSF52540">
    <property type="entry name" value="P-loop containing nucleoside triphosphate hydrolases"/>
    <property type="match status" value="1"/>
</dbReference>
<dbReference type="PROSITE" id="PS00152">
    <property type="entry name" value="ATPASE_ALPHA_BETA"/>
    <property type="match status" value="1"/>
</dbReference>
<keyword id="KW-0066">ATP synthesis</keyword>
<keyword id="KW-0067">ATP-binding</keyword>
<keyword id="KW-1003">Cell membrane</keyword>
<keyword id="KW-0139">CF(1)</keyword>
<keyword id="KW-0375">Hydrogen ion transport</keyword>
<keyword id="KW-0406">Ion transport</keyword>
<keyword id="KW-0472">Membrane</keyword>
<keyword id="KW-0547">Nucleotide-binding</keyword>
<keyword id="KW-1278">Translocase</keyword>
<keyword id="KW-0813">Transport</keyword>
<proteinExistence type="inferred from homology"/>
<name>ATPB_BACCZ</name>
<protein>
    <recommendedName>
        <fullName evidence="1">ATP synthase subunit beta</fullName>
        <ecNumber evidence="1">7.1.2.2</ecNumber>
    </recommendedName>
    <alternativeName>
        <fullName evidence="1">ATP synthase F1 sector subunit beta</fullName>
    </alternativeName>
    <alternativeName>
        <fullName evidence="1">F-ATPase subunit beta</fullName>
    </alternativeName>
</protein>
<organism>
    <name type="scientific">Bacillus cereus (strain ZK / E33L)</name>
    <dbReference type="NCBI Taxonomy" id="288681"/>
    <lineage>
        <taxon>Bacteria</taxon>
        <taxon>Bacillati</taxon>
        <taxon>Bacillota</taxon>
        <taxon>Bacilli</taxon>
        <taxon>Bacillales</taxon>
        <taxon>Bacillaceae</taxon>
        <taxon>Bacillus</taxon>
        <taxon>Bacillus cereus group</taxon>
    </lineage>
</organism>
<reference key="1">
    <citation type="journal article" date="2006" name="J. Bacteriol.">
        <title>Pathogenomic sequence analysis of Bacillus cereus and Bacillus thuringiensis isolates closely related to Bacillus anthracis.</title>
        <authorList>
            <person name="Han C.S."/>
            <person name="Xie G."/>
            <person name="Challacombe J.F."/>
            <person name="Altherr M.R."/>
            <person name="Bhotika S.S."/>
            <person name="Bruce D."/>
            <person name="Campbell C.S."/>
            <person name="Campbell M.L."/>
            <person name="Chen J."/>
            <person name="Chertkov O."/>
            <person name="Cleland C."/>
            <person name="Dimitrijevic M."/>
            <person name="Doggett N.A."/>
            <person name="Fawcett J.J."/>
            <person name="Glavina T."/>
            <person name="Goodwin L.A."/>
            <person name="Hill K.K."/>
            <person name="Hitchcock P."/>
            <person name="Jackson P.J."/>
            <person name="Keim P."/>
            <person name="Kewalramani A.R."/>
            <person name="Longmire J."/>
            <person name="Lucas S."/>
            <person name="Malfatti S."/>
            <person name="McMurry K."/>
            <person name="Meincke L.J."/>
            <person name="Misra M."/>
            <person name="Moseman B.L."/>
            <person name="Mundt M."/>
            <person name="Munk A.C."/>
            <person name="Okinaka R.T."/>
            <person name="Parson-Quintana B."/>
            <person name="Reilly L.P."/>
            <person name="Richardson P."/>
            <person name="Robinson D.L."/>
            <person name="Rubin E."/>
            <person name="Saunders E."/>
            <person name="Tapia R."/>
            <person name="Tesmer J.G."/>
            <person name="Thayer N."/>
            <person name="Thompson L.S."/>
            <person name="Tice H."/>
            <person name="Ticknor L.O."/>
            <person name="Wills P.L."/>
            <person name="Brettin T.S."/>
            <person name="Gilna P."/>
        </authorList>
    </citation>
    <scope>NUCLEOTIDE SEQUENCE [LARGE SCALE GENOMIC DNA]</scope>
    <source>
        <strain>ZK / E33L</strain>
    </source>
</reference>
<evidence type="ECO:0000255" key="1">
    <source>
        <dbReference type="HAMAP-Rule" id="MF_01347"/>
    </source>
</evidence>
<accession>Q630U3</accession>
<gene>
    <name evidence="1" type="primary">atpD</name>
    <name type="ordered locus">BCE33L5005</name>
</gene>
<feature type="chain" id="PRO_0000254208" description="ATP synthase subunit beta">
    <location>
        <begin position="1"/>
        <end position="469"/>
    </location>
</feature>
<feature type="binding site" evidence="1">
    <location>
        <begin position="156"/>
        <end position="163"/>
    </location>
    <ligand>
        <name>ATP</name>
        <dbReference type="ChEBI" id="CHEBI:30616"/>
    </ligand>
</feature>